<keyword id="KW-0067">ATP-binding</keyword>
<keyword id="KW-0460">Magnesium</keyword>
<keyword id="KW-0547">Nucleotide-binding</keyword>
<keyword id="KW-0808">Transferase</keyword>
<keyword id="KW-0819">tRNA processing</keyword>
<proteinExistence type="inferred from homology"/>
<protein>
    <recommendedName>
        <fullName evidence="1">tRNA dimethylallyltransferase</fullName>
        <ecNumber evidence="1">2.5.1.75</ecNumber>
    </recommendedName>
    <alternativeName>
        <fullName evidence="1">Dimethylallyl diphosphate:tRNA dimethylallyltransferase</fullName>
        <shortName evidence="1">DMAPP:tRNA dimethylallyltransferase</shortName>
        <shortName evidence="1">DMATase</shortName>
    </alternativeName>
    <alternativeName>
        <fullName evidence="1">Isopentenyl-diphosphate:tRNA isopentenyltransferase</fullName>
        <shortName evidence="1">IPP transferase</shortName>
        <shortName evidence="1">IPPT</shortName>
        <shortName evidence="1">IPTase</shortName>
    </alternativeName>
</protein>
<organism>
    <name type="scientific">Brucella abortus (strain S19)</name>
    <dbReference type="NCBI Taxonomy" id="430066"/>
    <lineage>
        <taxon>Bacteria</taxon>
        <taxon>Pseudomonadati</taxon>
        <taxon>Pseudomonadota</taxon>
        <taxon>Alphaproteobacteria</taxon>
        <taxon>Hyphomicrobiales</taxon>
        <taxon>Brucellaceae</taxon>
        <taxon>Brucella/Ochrobactrum group</taxon>
        <taxon>Brucella</taxon>
    </lineage>
</organism>
<dbReference type="EC" id="2.5.1.75" evidence="1"/>
<dbReference type="EMBL" id="CP000887">
    <property type="protein sequence ID" value="ACD72812.1"/>
    <property type="molecule type" value="Genomic_DNA"/>
</dbReference>
<dbReference type="RefSeq" id="WP_002964500.1">
    <property type="nucleotide sequence ID" value="NC_010742.1"/>
</dbReference>
<dbReference type="SMR" id="B2S6L5"/>
<dbReference type="GeneID" id="93016306"/>
<dbReference type="KEGG" id="bmc:BAbS19_I13170"/>
<dbReference type="HOGENOM" id="CLU_032616_0_1_5"/>
<dbReference type="Proteomes" id="UP000002565">
    <property type="component" value="Chromosome 1"/>
</dbReference>
<dbReference type="GO" id="GO:0005524">
    <property type="term" value="F:ATP binding"/>
    <property type="evidence" value="ECO:0007669"/>
    <property type="project" value="UniProtKB-UniRule"/>
</dbReference>
<dbReference type="GO" id="GO:0052381">
    <property type="term" value="F:tRNA dimethylallyltransferase activity"/>
    <property type="evidence" value="ECO:0007669"/>
    <property type="project" value="UniProtKB-UniRule"/>
</dbReference>
<dbReference type="GO" id="GO:0006400">
    <property type="term" value="P:tRNA modification"/>
    <property type="evidence" value="ECO:0007669"/>
    <property type="project" value="TreeGrafter"/>
</dbReference>
<dbReference type="Gene3D" id="1.10.20.140">
    <property type="match status" value="1"/>
</dbReference>
<dbReference type="Gene3D" id="3.40.50.300">
    <property type="entry name" value="P-loop containing nucleotide triphosphate hydrolases"/>
    <property type="match status" value="1"/>
</dbReference>
<dbReference type="HAMAP" id="MF_00185">
    <property type="entry name" value="IPP_trans"/>
    <property type="match status" value="1"/>
</dbReference>
<dbReference type="InterPro" id="IPR039657">
    <property type="entry name" value="Dimethylallyltransferase"/>
</dbReference>
<dbReference type="InterPro" id="IPR018022">
    <property type="entry name" value="IPT"/>
</dbReference>
<dbReference type="InterPro" id="IPR027417">
    <property type="entry name" value="P-loop_NTPase"/>
</dbReference>
<dbReference type="NCBIfam" id="TIGR00174">
    <property type="entry name" value="miaA"/>
    <property type="match status" value="1"/>
</dbReference>
<dbReference type="PANTHER" id="PTHR11088">
    <property type="entry name" value="TRNA DIMETHYLALLYLTRANSFERASE"/>
    <property type="match status" value="1"/>
</dbReference>
<dbReference type="PANTHER" id="PTHR11088:SF60">
    <property type="entry name" value="TRNA DIMETHYLALLYLTRANSFERASE"/>
    <property type="match status" value="1"/>
</dbReference>
<dbReference type="Pfam" id="PF01715">
    <property type="entry name" value="IPPT"/>
    <property type="match status" value="1"/>
</dbReference>
<dbReference type="SUPFAM" id="SSF52540">
    <property type="entry name" value="P-loop containing nucleoside triphosphate hydrolases"/>
    <property type="match status" value="2"/>
</dbReference>
<accession>B2S6L5</accession>
<comment type="function">
    <text evidence="1">Catalyzes the transfer of a dimethylallyl group onto the adenine at position 37 in tRNAs that read codons beginning with uridine, leading to the formation of N6-(dimethylallyl)adenosine (i(6)A).</text>
</comment>
<comment type="catalytic activity">
    <reaction evidence="1">
        <text>adenosine(37) in tRNA + dimethylallyl diphosphate = N(6)-dimethylallyladenosine(37) in tRNA + diphosphate</text>
        <dbReference type="Rhea" id="RHEA:26482"/>
        <dbReference type="Rhea" id="RHEA-COMP:10162"/>
        <dbReference type="Rhea" id="RHEA-COMP:10375"/>
        <dbReference type="ChEBI" id="CHEBI:33019"/>
        <dbReference type="ChEBI" id="CHEBI:57623"/>
        <dbReference type="ChEBI" id="CHEBI:74411"/>
        <dbReference type="ChEBI" id="CHEBI:74415"/>
        <dbReference type="EC" id="2.5.1.75"/>
    </reaction>
</comment>
<comment type="cofactor">
    <cofactor evidence="1">
        <name>Mg(2+)</name>
        <dbReference type="ChEBI" id="CHEBI:18420"/>
    </cofactor>
</comment>
<comment type="subunit">
    <text evidence="1">Monomer.</text>
</comment>
<comment type="similarity">
    <text evidence="1">Belongs to the IPP transferase family.</text>
</comment>
<evidence type="ECO:0000255" key="1">
    <source>
        <dbReference type="HAMAP-Rule" id="MF_00185"/>
    </source>
</evidence>
<sequence length="310" mass="33985">MSEDAVKNAILIAGPTASGKSALAIRMAKATGGFIVNTDSMQVYGVLDLLTARPSRADLAEAEHFLYGHVPPSSTYSTGKWFEDVEALLGRCELQGRVPIFVGGTGLYFRALLGGLSQTPEVSAQVRDHWRGRMEAEGAKALHAVLCVRDPAIAAALQPSDSQRIVRALEVLESTGKSLLEWQKVKGRALVDDQSAQKIVLRPDRAWLGERIARRFSAMWAEGAIDEVRALLALDLDPALPAMKAIGVREVSAFLAETMSREEAIERSVIATRQYAKRQSTWFRNQLGEDWRVYASGEEVFQGGSFRDPQ</sequence>
<name>MIAA_BRUA1</name>
<reference key="1">
    <citation type="journal article" date="2008" name="PLoS ONE">
        <title>Genome sequence of Brucella abortus vaccine strain S19 compared to virulent strains yields candidate virulence genes.</title>
        <authorList>
            <person name="Crasta O.R."/>
            <person name="Folkerts O."/>
            <person name="Fei Z."/>
            <person name="Mane S.P."/>
            <person name="Evans C."/>
            <person name="Martino-Catt S."/>
            <person name="Bricker B."/>
            <person name="Yu G."/>
            <person name="Du L."/>
            <person name="Sobral B.W."/>
        </authorList>
    </citation>
    <scope>NUCLEOTIDE SEQUENCE [LARGE SCALE GENOMIC DNA]</scope>
    <source>
        <strain>S19</strain>
    </source>
</reference>
<feature type="chain" id="PRO_1000098646" description="tRNA dimethylallyltransferase">
    <location>
        <begin position="1"/>
        <end position="310"/>
    </location>
</feature>
<feature type="region of interest" description="Interaction with substrate tRNA" evidence="1">
    <location>
        <begin position="39"/>
        <end position="42"/>
    </location>
</feature>
<feature type="region of interest" description="Interaction with substrate tRNA" evidence="1">
    <location>
        <begin position="163"/>
        <end position="167"/>
    </location>
</feature>
<feature type="binding site" evidence="1">
    <location>
        <begin position="14"/>
        <end position="21"/>
    </location>
    <ligand>
        <name>ATP</name>
        <dbReference type="ChEBI" id="CHEBI:30616"/>
    </ligand>
</feature>
<feature type="binding site" evidence="1">
    <location>
        <begin position="16"/>
        <end position="21"/>
    </location>
    <ligand>
        <name>substrate</name>
    </ligand>
</feature>
<feature type="site" description="Interaction with substrate tRNA" evidence="1">
    <location>
        <position position="105"/>
    </location>
</feature>
<feature type="site" description="Interaction with substrate tRNA" evidence="1">
    <location>
        <position position="127"/>
    </location>
</feature>
<gene>
    <name evidence="1" type="primary">miaA</name>
    <name type="ordered locus">BAbS19_I13170</name>
</gene>